<proteinExistence type="inferred from homology"/>
<sequence>MATIQQQKIRIRLKAFDRRLLDTSCEKIVDTANRTGATAIGPIPLPTKRRIYCLLRSPHVDKDSREHFETRTHRRIVDIYQPSSKTIDALMKLDLPAGVDIEVKL</sequence>
<comment type="function">
    <text evidence="1">Involved in the binding of tRNA to the ribosomes.</text>
</comment>
<comment type="subunit">
    <text evidence="1">Part of the 30S ribosomal subunit.</text>
</comment>
<comment type="similarity">
    <text evidence="1">Belongs to the universal ribosomal protein uS10 family.</text>
</comment>
<reference key="1">
    <citation type="journal article" date="2015" name="Proc. Natl. Acad. Sci. U.S.A.">
        <title>Trichodesmium genome maintains abundant, widespread noncoding DNA in situ, despite oligotrophic lifestyle.</title>
        <authorList>
            <person name="Walworth N."/>
            <person name="Pfreundt U."/>
            <person name="Nelson W.C."/>
            <person name="Mincer T."/>
            <person name="Heidelberg J.F."/>
            <person name="Fu F."/>
            <person name="Waterbury J.B."/>
            <person name="Glavina del Rio T."/>
            <person name="Goodwin L."/>
            <person name="Kyrpides N.C."/>
            <person name="Land M.L."/>
            <person name="Woyke T."/>
            <person name="Hutchins D.A."/>
            <person name="Hess W.R."/>
            <person name="Webb E.A."/>
        </authorList>
    </citation>
    <scope>NUCLEOTIDE SEQUENCE [LARGE SCALE GENOMIC DNA]</scope>
    <source>
        <strain>IMS101</strain>
    </source>
</reference>
<keyword id="KW-0687">Ribonucleoprotein</keyword>
<keyword id="KW-0689">Ribosomal protein</keyword>
<gene>
    <name evidence="1" type="primary">rpsJ</name>
    <name evidence="1" type="synonym">rps10</name>
    <name type="ordered locus">Tery_0477</name>
</gene>
<feature type="chain" id="PRO_1000015132" description="Small ribosomal subunit protein uS10">
    <location>
        <begin position="1"/>
        <end position="105"/>
    </location>
</feature>
<dbReference type="EMBL" id="CP000393">
    <property type="protein sequence ID" value="ABG49933.1"/>
    <property type="molecule type" value="Genomic_DNA"/>
</dbReference>
<dbReference type="SMR" id="Q118Z1"/>
<dbReference type="STRING" id="203124.Tery_0477"/>
<dbReference type="KEGG" id="ter:Tery_0477"/>
<dbReference type="eggNOG" id="COG0051">
    <property type="taxonomic scope" value="Bacteria"/>
</dbReference>
<dbReference type="HOGENOM" id="CLU_122625_1_3_3"/>
<dbReference type="OrthoDB" id="9804464at2"/>
<dbReference type="GO" id="GO:1990904">
    <property type="term" value="C:ribonucleoprotein complex"/>
    <property type="evidence" value="ECO:0007669"/>
    <property type="project" value="UniProtKB-KW"/>
</dbReference>
<dbReference type="GO" id="GO:0005840">
    <property type="term" value="C:ribosome"/>
    <property type="evidence" value="ECO:0007669"/>
    <property type="project" value="UniProtKB-KW"/>
</dbReference>
<dbReference type="GO" id="GO:0003735">
    <property type="term" value="F:structural constituent of ribosome"/>
    <property type="evidence" value="ECO:0007669"/>
    <property type="project" value="InterPro"/>
</dbReference>
<dbReference type="GO" id="GO:0000049">
    <property type="term" value="F:tRNA binding"/>
    <property type="evidence" value="ECO:0007669"/>
    <property type="project" value="UniProtKB-UniRule"/>
</dbReference>
<dbReference type="GO" id="GO:0006412">
    <property type="term" value="P:translation"/>
    <property type="evidence" value="ECO:0007669"/>
    <property type="project" value="UniProtKB-UniRule"/>
</dbReference>
<dbReference type="FunFam" id="3.30.70.600:FF:000001">
    <property type="entry name" value="30S ribosomal protein S10"/>
    <property type="match status" value="1"/>
</dbReference>
<dbReference type="Gene3D" id="3.30.70.600">
    <property type="entry name" value="Ribosomal protein S10 domain"/>
    <property type="match status" value="1"/>
</dbReference>
<dbReference type="HAMAP" id="MF_00508">
    <property type="entry name" value="Ribosomal_uS10"/>
    <property type="match status" value="1"/>
</dbReference>
<dbReference type="InterPro" id="IPR001848">
    <property type="entry name" value="Ribosomal_uS10"/>
</dbReference>
<dbReference type="InterPro" id="IPR018268">
    <property type="entry name" value="Ribosomal_uS10_CS"/>
</dbReference>
<dbReference type="InterPro" id="IPR027486">
    <property type="entry name" value="Ribosomal_uS10_dom"/>
</dbReference>
<dbReference type="InterPro" id="IPR036838">
    <property type="entry name" value="Ribosomal_uS10_dom_sf"/>
</dbReference>
<dbReference type="NCBIfam" id="NF001861">
    <property type="entry name" value="PRK00596.1"/>
    <property type="match status" value="1"/>
</dbReference>
<dbReference type="NCBIfam" id="TIGR01049">
    <property type="entry name" value="rpsJ_bact"/>
    <property type="match status" value="1"/>
</dbReference>
<dbReference type="PANTHER" id="PTHR11700">
    <property type="entry name" value="30S RIBOSOMAL PROTEIN S10 FAMILY MEMBER"/>
    <property type="match status" value="1"/>
</dbReference>
<dbReference type="Pfam" id="PF00338">
    <property type="entry name" value="Ribosomal_S10"/>
    <property type="match status" value="1"/>
</dbReference>
<dbReference type="PRINTS" id="PR00971">
    <property type="entry name" value="RIBOSOMALS10"/>
</dbReference>
<dbReference type="SMART" id="SM01403">
    <property type="entry name" value="Ribosomal_S10"/>
    <property type="match status" value="1"/>
</dbReference>
<dbReference type="SUPFAM" id="SSF54999">
    <property type="entry name" value="Ribosomal protein S10"/>
    <property type="match status" value="1"/>
</dbReference>
<dbReference type="PROSITE" id="PS00361">
    <property type="entry name" value="RIBOSOMAL_S10"/>
    <property type="match status" value="1"/>
</dbReference>
<accession>Q118Z1</accession>
<name>RS10_TRIEI</name>
<protein>
    <recommendedName>
        <fullName evidence="1">Small ribosomal subunit protein uS10</fullName>
    </recommendedName>
    <alternativeName>
        <fullName evidence="2">30S ribosomal protein S10</fullName>
    </alternativeName>
</protein>
<organism>
    <name type="scientific">Trichodesmium erythraeum (strain IMS101)</name>
    <dbReference type="NCBI Taxonomy" id="203124"/>
    <lineage>
        <taxon>Bacteria</taxon>
        <taxon>Bacillati</taxon>
        <taxon>Cyanobacteriota</taxon>
        <taxon>Cyanophyceae</taxon>
        <taxon>Oscillatoriophycideae</taxon>
        <taxon>Oscillatoriales</taxon>
        <taxon>Microcoleaceae</taxon>
        <taxon>Trichodesmium</taxon>
    </lineage>
</organism>
<evidence type="ECO:0000255" key="1">
    <source>
        <dbReference type="HAMAP-Rule" id="MF_00508"/>
    </source>
</evidence>
<evidence type="ECO:0000305" key="2"/>